<protein>
    <recommendedName>
        <fullName>Cytochrome P450 10</fullName>
        <ecNumber>1.14.-.-</ecNumber>
    </recommendedName>
    <alternativeName>
        <fullName>CYPX</fullName>
    </alternativeName>
</protein>
<organism>
    <name type="scientific">Lymnaea stagnalis</name>
    <name type="common">Great pond snail</name>
    <name type="synonym">Helix stagnalis</name>
    <dbReference type="NCBI Taxonomy" id="6523"/>
    <lineage>
        <taxon>Eukaryota</taxon>
        <taxon>Metazoa</taxon>
        <taxon>Spiralia</taxon>
        <taxon>Lophotrochozoa</taxon>
        <taxon>Mollusca</taxon>
        <taxon>Gastropoda</taxon>
        <taxon>Heterobranchia</taxon>
        <taxon>Euthyneura</taxon>
        <taxon>Panpulmonata</taxon>
        <taxon>Hygrophila</taxon>
        <taxon>Lymnaeoidea</taxon>
        <taxon>Lymnaeidae</taxon>
        <taxon>Lymnaea</taxon>
    </lineage>
</organism>
<name>CP10_LYMST</name>
<reference key="1">
    <citation type="journal article" date="1992" name="J. Biochem.">
        <title>Molecular cloning of a cDNA encoding a member of a novel cytochrome P450 family in the mollusc Lymnaea stagnalis.</title>
        <authorList>
            <person name="Teunissen Y."/>
            <person name="Geraerts W.P.M."/>
            <person name="van Heerikhuizen H."/>
            <person name="Planta R.J."/>
            <person name="Joosse J."/>
        </authorList>
    </citation>
    <scope>NUCLEOTIDE SEQUENCE [MRNA]</scope>
</reference>
<proteinExistence type="evidence at transcript level"/>
<comment type="function">
    <text>May be involved in the synthesis of the female gonadotropic hormone produced by the dorsal bodies.</text>
</comment>
<comment type="cofactor">
    <cofactor evidence="1">
        <name>heme</name>
        <dbReference type="ChEBI" id="CHEBI:30413"/>
    </cofactor>
</comment>
<comment type="tissue specificity">
    <text>Abundantly expressed in the female gonadotropic hormone producing dorsal bodies.</text>
</comment>
<comment type="similarity">
    <text evidence="2">Belongs to the cytochrome P450 family.</text>
</comment>
<evidence type="ECO:0000250" key="1"/>
<evidence type="ECO:0000305" key="2"/>
<feature type="chain" id="PRO_0000051922" description="Cytochrome P450 10">
    <location>
        <begin position="1"/>
        <end position="545"/>
    </location>
</feature>
<feature type="binding site" description="axial binding residue" evidence="1">
    <location>
        <position position="493"/>
    </location>
    <ligand>
        <name>heme</name>
        <dbReference type="ChEBI" id="CHEBI:30413"/>
    </ligand>
    <ligandPart>
        <name>Fe</name>
        <dbReference type="ChEBI" id="CHEBI:18248"/>
    </ligandPart>
</feature>
<keyword id="KW-0349">Heme</keyword>
<keyword id="KW-0408">Iron</keyword>
<keyword id="KW-0479">Metal-binding</keyword>
<keyword id="KW-0503">Monooxygenase</keyword>
<keyword id="KW-0560">Oxidoreductase</keyword>
<sequence length="545" mass="62360">MAIMKKFIHHSLKQLIKPNLTSTKRVVSTSPRKEQGVAAISLEPSEMAQCPFRKSIDTFTETTNAVKAPGMTEVQPFERIPGPKGLPIVGTLFDYFKKDGPKFSKMFEVYRQRALEFGNIYYEKVGHFHCVVISSPGEYSRLVHAERQYPNRREMVPIAYYRKQKGFDLGVVNSQGEEWYRQRTVVSKKMLKLAEVSNFSTQMGEVSDDFVKRLSHVRDSHGEIPALERELFKWAMESIGTFLFEERIGCLGQETSPMAQTFIANLEGFFKTLQPLMYNLPTYKLWSTKLWKQFENYSDNVIDIGRSLVEKKWHPCKMEVTQNLHLISYLVNNGSMSTKEVTGLIVDLMLAAVETTSSATVWCLYNLAKNPQVQEKLFQEITEAQAKNNGTISAEDLCKLPMVKAVVKETLRLYPITYSTSRNIAEDMELGGYTIPAGTHVQANLYGMYRDPSLFPEPEGILPERWLRMNGSQMDATIKSTSQLVWGHGARMCLGRRIAEQEMHITLSKIIQNFTLSYNHDDVEPILNTMLTPDRPVRIEFKPRQ</sequence>
<gene>
    <name type="primary">CYP10</name>
</gene>
<accession>P48416</accession>
<dbReference type="EC" id="1.14.-.-"/>
<dbReference type="EMBL" id="S46130">
    <property type="protein sequence ID" value="AAB23599.1"/>
    <property type="molecule type" value="mRNA"/>
</dbReference>
<dbReference type="PIR" id="JX0225">
    <property type="entry name" value="JX0225"/>
</dbReference>
<dbReference type="SMR" id="P48416"/>
<dbReference type="KEGG" id="ag:AAB23599"/>
<dbReference type="GO" id="GO:0020037">
    <property type="term" value="F:heme binding"/>
    <property type="evidence" value="ECO:0007669"/>
    <property type="project" value="InterPro"/>
</dbReference>
<dbReference type="GO" id="GO:0005506">
    <property type="term" value="F:iron ion binding"/>
    <property type="evidence" value="ECO:0007669"/>
    <property type="project" value="InterPro"/>
</dbReference>
<dbReference type="GO" id="GO:0004497">
    <property type="term" value="F:monooxygenase activity"/>
    <property type="evidence" value="ECO:0007669"/>
    <property type="project" value="UniProtKB-KW"/>
</dbReference>
<dbReference type="GO" id="GO:0016705">
    <property type="term" value="F:oxidoreductase activity, acting on paired donors, with incorporation or reduction of molecular oxygen"/>
    <property type="evidence" value="ECO:0007669"/>
    <property type="project" value="InterPro"/>
</dbReference>
<dbReference type="CDD" id="cd11054">
    <property type="entry name" value="CYP24A1-like"/>
    <property type="match status" value="1"/>
</dbReference>
<dbReference type="FunFam" id="1.10.630.10:FF:000006">
    <property type="entry name" value="Cytochrome P450 302a1, mitochondrial"/>
    <property type="match status" value="1"/>
</dbReference>
<dbReference type="Gene3D" id="1.10.630.10">
    <property type="entry name" value="Cytochrome P450"/>
    <property type="match status" value="1"/>
</dbReference>
<dbReference type="InterPro" id="IPR050479">
    <property type="entry name" value="CYP11_CYP27_families"/>
</dbReference>
<dbReference type="InterPro" id="IPR001128">
    <property type="entry name" value="Cyt_P450"/>
</dbReference>
<dbReference type="InterPro" id="IPR017972">
    <property type="entry name" value="Cyt_P450_CS"/>
</dbReference>
<dbReference type="InterPro" id="IPR002401">
    <property type="entry name" value="Cyt_P450_E_grp-I"/>
</dbReference>
<dbReference type="InterPro" id="IPR036396">
    <property type="entry name" value="Cyt_P450_sf"/>
</dbReference>
<dbReference type="PANTHER" id="PTHR24279">
    <property type="entry name" value="CYTOCHROME P450"/>
    <property type="match status" value="1"/>
</dbReference>
<dbReference type="PANTHER" id="PTHR24279:SF120">
    <property type="entry name" value="CYTOCHROME P450"/>
    <property type="match status" value="1"/>
</dbReference>
<dbReference type="Pfam" id="PF00067">
    <property type="entry name" value="p450"/>
    <property type="match status" value="1"/>
</dbReference>
<dbReference type="PRINTS" id="PR00463">
    <property type="entry name" value="EP450I"/>
</dbReference>
<dbReference type="PRINTS" id="PR00385">
    <property type="entry name" value="P450"/>
</dbReference>
<dbReference type="SUPFAM" id="SSF48264">
    <property type="entry name" value="Cytochrome P450"/>
    <property type="match status" value="1"/>
</dbReference>
<dbReference type="PROSITE" id="PS00086">
    <property type="entry name" value="CYTOCHROME_P450"/>
    <property type="match status" value="1"/>
</dbReference>